<reference key="1">
    <citation type="journal article" date="1997" name="Genomics">
        <title>The NNP-1 gene (D21S2056E), which encodes a novel nuclear protein, maps in close proximity to the cystatin B gene within the EPM1 and APECED critical region on 21q22.3.</title>
        <authorList>
            <person name="Jansen E."/>
            <person name="Meulemans S.M.P."/>
            <person name="Orlans I.C.R."/>
            <person name="Van de Ven W.J.M."/>
        </authorList>
    </citation>
    <scope>NUCLEOTIDE SEQUENCE [MRNA]</scope>
    <scope>TISSUE SPECIFICITY</scope>
    <scope>SUBCELLULAR LOCATION</scope>
    <source>
        <tissue>Kidney</tissue>
    </source>
</reference>
<reference key="2">
    <citation type="journal article" date="2000" name="Nature">
        <title>The DNA sequence of human chromosome 21.</title>
        <authorList>
            <person name="Hattori M."/>
            <person name="Fujiyama A."/>
            <person name="Taylor T.D."/>
            <person name="Watanabe H."/>
            <person name="Yada T."/>
            <person name="Park H.-S."/>
            <person name="Toyoda A."/>
            <person name="Ishii K."/>
            <person name="Totoki Y."/>
            <person name="Choi D.-K."/>
            <person name="Groner Y."/>
            <person name="Soeda E."/>
            <person name="Ohki M."/>
            <person name="Takagi T."/>
            <person name="Sakaki Y."/>
            <person name="Taudien S."/>
            <person name="Blechschmidt K."/>
            <person name="Polley A."/>
            <person name="Menzel U."/>
            <person name="Delabar J."/>
            <person name="Kumpf K."/>
            <person name="Lehmann R."/>
            <person name="Patterson D."/>
            <person name="Reichwald K."/>
            <person name="Rump A."/>
            <person name="Schillhabel M."/>
            <person name="Schudy A."/>
            <person name="Zimmermann W."/>
            <person name="Rosenthal A."/>
            <person name="Kudoh J."/>
            <person name="Shibuya K."/>
            <person name="Kawasaki K."/>
            <person name="Asakawa S."/>
            <person name="Shintani A."/>
            <person name="Sasaki T."/>
            <person name="Nagamine K."/>
            <person name="Mitsuyama S."/>
            <person name="Antonarakis S.E."/>
            <person name="Minoshima S."/>
            <person name="Shimizu N."/>
            <person name="Nordsiek G."/>
            <person name="Hornischer K."/>
            <person name="Brandt P."/>
            <person name="Scharfe M."/>
            <person name="Schoen O."/>
            <person name="Desario A."/>
            <person name="Reichelt J."/>
            <person name="Kauer G."/>
            <person name="Bloecker H."/>
            <person name="Ramser J."/>
            <person name="Beck A."/>
            <person name="Klages S."/>
            <person name="Hennig S."/>
            <person name="Riesselmann L."/>
            <person name="Dagand E."/>
            <person name="Wehrmeyer S."/>
            <person name="Borzym K."/>
            <person name="Gardiner K."/>
            <person name="Nizetic D."/>
            <person name="Francis F."/>
            <person name="Lehrach H."/>
            <person name="Reinhardt R."/>
            <person name="Yaspo M.-L."/>
        </authorList>
    </citation>
    <scope>NUCLEOTIDE SEQUENCE [LARGE SCALE GENOMIC DNA]</scope>
</reference>
<reference key="3">
    <citation type="journal article" date="2004" name="Genome Res.">
        <title>The status, quality, and expansion of the NIH full-length cDNA project: the Mammalian Gene Collection (MGC).</title>
        <authorList>
            <consortium name="The MGC Project Team"/>
        </authorList>
    </citation>
    <scope>NUCLEOTIDE SEQUENCE [LARGE SCALE MRNA]</scope>
    <source>
        <tissue>Lung</tissue>
        <tissue>Small intestine</tissue>
    </source>
</reference>
<reference key="4">
    <citation type="journal article" date="2007" name="BMC Genomics">
        <title>The full-ORF clone resource of the German cDNA consortium.</title>
        <authorList>
            <person name="Bechtel S."/>
            <person name="Rosenfelder H."/>
            <person name="Duda A."/>
            <person name="Schmidt C.P."/>
            <person name="Ernst U."/>
            <person name="Wellenreuther R."/>
            <person name="Mehrle A."/>
            <person name="Schuster C."/>
            <person name="Bahr A."/>
            <person name="Bloecker H."/>
            <person name="Heubner D."/>
            <person name="Hoerlein A."/>
            <person name="Michel G."/>
            <person name="Wedler H."/>
            <person name="Koehrer K."/>
            <person name="Ottenwaelder B."/>
            <person name="Poustka A."/>
            <person name="Wiemann S."/>
            <person name="Schupp I."/>
        </authorList>
    </citation>
    <scope>NUCLEOTIDE SEQUENCE [LARGE SCALE MRNA] OF 103-461</scope>
    <scope>VARIANT ARG-326</scope>
    <source>
        <tissue>Testis</tissue>
    </source>
</reference>
<reference key="5">
    <citation type="journal article" date="1999" name="J. Cell Sci.">
        <title>The nucleolar antigen Nop52, the human homologue of the yeast ribosomal RNA processing RRP1, is recruited at late stages of nucleologenesis.</title>
        <authorList>
            <person name="Savino T.M."/>
            <person name="Bastos R."/>
            <person name="Jansen E."/>
            <person name="Hernandez-Verdun D."/>
        </authorList>
    </citation>
    <scope>FUNCTION</scope>
</reference>
<reference key="6">
    <citation type="journal article" date="2002" name="Mol. Biol. Cell">
        <title>Functional proteomic analysis of human nucleolus.</title>
        <authorList>
            <person name="Scherl A."/>
            <person name="Coute Y."/>
            <person name="Deon C."/>
            <person name="Calle A."/>
            <person name="Kindbeiter K."/>
            <person name="Sanchez J.-C."/>
            <person name="Greco A."/>
            <person name="Hochstrasser D.F."/>
            <person name="Diaz J.-J."/>
        </authorList>
    </citation>
    <scope>SUBCELLULAR LOCATION [LARGE SCALE ANALYSIS]</scope>
    <source>
        <tissue>Cervix carcinoma</tissue>
    </source>
</reference>
<reference key="7">
    <citation type="journal article" date="2010" name="Mol. Biol. Cell">
        <title>RRP1B targets PP1 to mammalian cell nucleoli and is associated with pre-60S ribosomal subunits.</title>
        <authorList>
            <person name="Chamousset D."/>
            <person name="De Wever V."/>
            <person name="Moorhead G.B."/>
            <person name="Chen Y."/>
            <person name="Boisvert F.M."/>
            <person name="Lamond A.I."/>
            <person name="Trinkle-Mulcahy L."/>
        </authorList>
    </citation>
    <scope>INTERACTION WITH RRP1B</scope>
</reference>
<reference key="8">
    <citation type="journal article" date="2010" name="Sci. Signal.">
        <title>Quantitative phosphoproteomics reveals widespread full phosphorylation site occupancy during mitosis.</title>
        <authorList>
            <person name="Olsen J.V."/>
            <person name="Vermeulen M."/>
            <person name="Santamaria A."/>
            <person name="Kumar C."/>
            <person name="Miller M.L."/>
            <person name="Jensen L.J."/>
            <person name="Gnad F."/>
            <person name="Cox J."/>
            <person name="Jensen T.S."/>
            <person name="Nigg E.A."/>
            <person name="Brunak S."/>
            <person name="Mann M."/>
        </authorList>
    </citation>
    <scope>PHOSPHORYLATION [LARGE SCALE ANALYSIS] AT THR-412</scope>
    <scope>IDENTIFICATION BY MASS SPECTROMETRY [LARGE SCALE ANALYSIS]</scope>
    <source>
        <tissue>Cervix carcinoma</tissue>
    </source>
</reference>
<reference key="9">
    <citation type="journal article" date="2011" name="BMC Syst. Biol.">
        <title>Initial characterization of the human central proteome.</title>
        <authorList>
            <person name="Burkard T.R."/>
            <person name="Planyavsky M."/>
            <person name="Kaupe I."/>
            <person name="Breitwieser F.P."/>
            <person name="Buerckstuemmer T."/>
            <person name="Bennett K.L."/>
            <person name="Superti-Furga G."/>
            <person name="Colinge J."/>
        </authorList>
    </citation>
    <scope>IDENTIFICATION BY MASS SPECTROMETRY [LARGE SCALE ANALYSIS]</scope>
</reference>
<reference key="10">
    <citation type="journal article" date="2011" name="Mol. Cell. Proteomics">
        <title>Splicing factor 2-associated protein p32 participates in ribosome biogenesis by regulating the binding of Nop52 and fibrillarin to preribosome particles.</title>
        <authorList>
            <person name="Yoshikawa H."/>
            <person name="Komatsu W."/>
            <person name="Hayano T."/>
            <person name="Miura Y."/>
            <person name="Homma K."/>
            <person name="Izumikawa K."/>
            <person name="Ishikawa H."/>
            <person name="Miyazawa N."/>
            <person name="Tachikawa H."/>
            <person name="Yamauchi Y."/>
            <person name="Isobe T."/>
            <person name="Takahashi N."/>
        </authorList>
    </citation>
    <scope>INTERACTION WITH C1QBP</scope>
</reference>
<reference key="11">
    <citation type="journal article" date="2011" name="Sci. Signal.">
        <title>System-wide temporal characterization of the proteome and phosphoproteome of human embryonic stem cell differentiation.</title>
        <authorList>
            <person name="Rigbolt K.T."/>
            <person name="Prokhorova T.A."/>
            <person name="Akimov V."/>
            <person name="Henningsen J."/>
            <person name="Johansen P.T."/>
            <person name="Kratchmarova I."/>
            <person name="Kassem M."/>
            <person name="Mann M."/>
            <person name="Olsen J.V."/>
            <person name="Blagoev B."/>
        </authorList>
    </citation>
    <scope>PHOSPHORYLATION [LARGE SCALE ANALYSIS] AT SER-247; SER-250 AND SER-251</scope>
    <scope>IDENTIFICATION BY MASS SPECTROMETRY [LARGE SCALE ANALYSIS]</scope>
</reference>
<reference key="12">
    <citation type="journal article" date="2013" name="J. Proteome Res.">
        <title>Toward a comprehensive characterization of a human cancer cell phosphoproteome.</title>
        <authorList>
            <person name="Zhou H."/>
            <person name="Di Palma S."/>
            <person name="Preisinger C."/>
            <person name="Peng M."/>
            <person name="Polat A.N."/>
            <person name="Heck A.J."/>
            <person name="Mohammed S."/>
        </authorList>
    </citation>
    <scope>PHOSPHORYLATION [LARGE SCALE ANALYSIS] AT SER-383</scope>
    <scope>IDENTIFICATION BY MASS SPECTROMETRY [LARGE SCALE ANALYSIS]</scope>
    <source>
        <tissue>Erythroleukemia</tissue>
    </source>
</reference>
<reference key="13">
    <citation type="journal article" date="2014" name="J. Proteomics">
        <title>An enzyme assisted RP-RPLC approach for in-depth analysis of human liver phosphoproteome.</title>
        <authorList>
            <person name="Bian Y."/>
            <person name="Song C."/>
            <person name="Cheng K."/>
            <person name="Dong M."/>
            <person name="Wang F."/>
            <person name="Huang J."/>
            <person name="Sun D."/>
            <person name="Wang L."/>
            <person name="Ye M."/>
            <person name="Zou H."/>
        </authorList>
    </citation>
    <scope>PHOSPHORYLATION [LARGE SCALE ANALYSIS] AT SER-245</scope>
    <scope>IDENTIFICATION BY MASS SPECTROMETRY [LARGE SCALE ANALYSIS]</scope>
    <source>
        <tissue>Liver</tissue>
    </source>
</reference>
<reference key="14">
    <citation type="journal article" date="2016" name="J. Biol. Chem.">
        <title>Substrate specificity of the HEMK2 protein glutamine methyltransferase and identification of novel substrates.</title>
        <authorList>
            <person name="Kusevic D."/>
            <person name="Kudithipudi S."/>
            <person name="Jeltsch A."/>
        </authorList>
    </citation>
    <scope>METHYLATION AT GLN-427</scope>
    <scope>MUTAGENESIS OF GLN-427</scope>
</reference>
<accession>P56182</accession>
<accession>Q9NST5</accession>
<protein>
    <recommendedName>
        <fullName>Ribosomal RNA processing protein 1 homolog A</fullName>
    </recommendedName>
    <alternativeName>
        <fullName>Novel nuclear protein 1</fullName>
        <shortName>NNP-1</shortName>
    </alternativeName>
    <alternativeName>
        <fullName>Nucleolar protein Nop52</fullName>
    </alternativeName>
    <alternativeName>
        <fullName>RRP1-like protein</fullName>
    </alternativeName>
</protein>
<keyword id="KW-0002">3D-structure</keyword>
<keyword id="KW-0488">Methylation</keyword>
<keyword id="KW-0539">Nucleus</keyword>
<keyword id="KW-0597">Phosphoprotein</keyword>
<keyword id="KW-1267">Proteomics identification</keyword>
<keyword id="KW-1185">Reference proteome</keyword>
<keyword id="KW-0698">rRNA processing</keyword>
<gene>
    <name type="primary">RRP1</name>
    <name type="synonym">D21S2056E</name>
    <name type="synonym">NNP1</name>
    <name type="synonym">NOP52</name>
    <name type="synonym">RRP1A</name>
</gene>
<sequence>MVSRVQLPPEIQLAQRLAGNEQVTRDRAVRKLRKYIVARTQRAAGGFTHDELLKVWKGLFYCMWMQDKPLLQEELGRTISQLVHAFQTTEAQHLFLQAFWQTMNREWTGIDRLRLDKFYMLMRMVLNESLKVLKMQGWEERQIEELLELLMTEILHPSSQAPNGVKSHFIEIFLEELTKVGAEELTADQNLKFIDPFCRIAARTKDSLVLNNITRGIFETIVEQAPLAIEDLLNELDTQDEEVASDSDESSEGGERGDALSQKRSEKPPAGSICRAEPEAGEEQAGDDRDSGGPVLQFDYEAVANRLFEMASRQSTPSQNRKRLYKVIRKLQDLAGGIFPEDEIPEKACRRLLEGRRQKKTKKQKRLLRLQQERGKGEKEPPSPGMERKRSRRRGVGADPEARAEAGEQPGTAERALLRDQPRGRGQRGARQRRRTPRPLTSARAKAANVQEPEKKKKRRE</sequence>
<dbReference type="EMBL" id="U79775">
    <property type="protein sequence ID" value="AAC51625.1"/>
    <property type="molecule type" value="mRNA"/>
</dbReference>
<dbReference type="EMBL" id="AP001752">
    <property type="protein sequence ID" value="BAA95542.1"/>
    <property type="molecule type" value="Genomic_DNA"/>
</dbReference>
<dbReference type="EMBL" id="BC000380">
    <property type="protein sequence ID" value="AAH00380.1"/>
    <property type="molecule type" value="mRNA"/>
</dbReference>
<dbReference type="EMBL" id="AL137757">
    <property type="protein sequence ID" value="CAB70909.1"/>
    <property type="molecule type" value="mRNA"/>
</dbReference>
<dbReference type="CCDS" id="CCDS42951.1"/>
<dbReference type="PIR" id="T46485">
    <property type="entry name" value="T46485"/>
</dbReference>
<dbReference type="RefSeq" id="NP_003674.1">
    <property type="nucleotide sequence ID" value="NM_003683.6"/>
</dbReference>
<dbReference type="PDB" id="8FKP">
    <property type="method" value="EM"/>
    <property type="resolution" value="2.85 A"/>
    <property type="chains" value="NO=1-461"/>
</dbReference>
<dbReference type="PDB" id="8FKR">
    <property type="method" value="EM"/>
    <property type="resolution" value="2.89 A"/>
    <property type="chains" value="NO=1-461"/>
</dbReference>
<dbReference type="PDB" id="8FKT">
    <property type="method" value="EM"/>
    <property type="resolution" value="2.81 A"/>
    <property type="chains" value="NO=1-461"/>
</dbReference>
<dbReference type="PDB" id="8FKV">
    <property type="method" value="EM"/>
    <property type="resolution" value="2.47 A"/>
    <property type="chains" value="NO=1-461"/>
</dbReference>
<dbReference type="PDBsum" id="8FKP"/>
<dbReference type="PDBsum" id="8FKR"/>
<dbReference type="PDBsum" id="8FKT"/>
<dbReference type="PDBsum" id="8FKV"/>
<dbReference type="EMDB" id="EMD-29252"/>
<dbReference type="EMDB" id="EMD-29254"/>
<dbReference type="EMDB" id="EMD-29256"/>
<dbReference type="EMDB" id="EMD-29258"/>
<dbReference type="SMR" id="P56182"/>
<dbReference type="BioGRID" id="114137">
    <property type="interactions" value="183"/>
</dbReference>
<dbReference type="FunCoup" id="P56182">
    <property type="interactions" value="2618"/>
</dbReference>
<dbReference type="IntAct" id="P56182">
    <property type="interactions" value="83"/>
</dbReference>
<dbReference type="MINT" id="P56182"/>
<dbReference type="STRING" id="9606.ENSP00000417464"/>
<dbReference type="GlyGen" id="P56182">
    <property type="glycosylation" value="1 site, 1 O-linked glycan (1 site)"/>
</dbReference>
<dbReference type="iPTMnet" id="P56182"/>
<dbReference type="PhosphoSitePlus" id="P56182"/>
<dbReference type="SwissPalm" id="P56182"/>
<dbReference type="BioMuta" id="RRP1"/>
<dbReference type="DMDM" id="2829451"/>
<dbReference type="jPOST" id="P56182"/>
<dbReference type="MassIVE" id="P56182"/>
<dbReference type="PaxDb" id="9606-ENSP00000417464"/>
<dbReference type="PeptideAtlas" id="P56182"/>
<dbReference type="ProteomicsDB" id="56901"/>
<dbReference type="Pumba" id="P56182"/>
<dbReference type="Antibodypedia" id="5231">
    <property type="antibodies" value="172 antibodies from 27 providers"/>
</dbReference>
<dbReference type="DNASU" id="8568"/>
<dbReference type="Ensembl" id="ENST00000497547.2">
    <property type="protein sequence ID" value="ENSP00000417464.1"/>
    <property type="gene ID" value="ENSG00000160214.13"/>
</dbReference>
<dbReference type="GeneID" id="8568"/>
<dbReference type="KEGG" id="hsa:8568"/>
<dbReference type="MANE-Select" id="ENST00000497547.2">
    <property type="protein sequence ID" value="ENSP00000417464.1"/>
    <property type="RefSeq nucleotide sequence ID" value="NM_003683.6"/>
    <property type="RefSeq protein sequence ID" value="NP_003674.1"/>
</dbReference>
<dbReference type="UCSC" id="uc002zds.3">
    <property type="organism name" value="human"/>
</dbReference>
<dbReference type="AGR" id="HGNC:18785"/>
<dbReference type="CTD" id="8568"/>
<dbReference type="DisGeNET" id="8568"/>
<dbReference type="GeneCards" id="RRP1"/>
<dbReference type="HGNC" id="HGNC:18785">
    <property type="gene designation" value="RRP1"/>
</dbReference>
<dbReference type="HPA" id="ENSG00000160214">
    <property type="expression patterns" value="Low tissue specificity"/>
</dbReference>
<dbReference type="MIM" id="610653">
    <property type="type" value="gene"/>
</dbReference>
<dbReference type="neXtProt" id="NX_P56182"/>
<dbReference type="OpenTargets" id="ENSG00000160214"/>
<dbReference type="PharmGKB" id="PA162402091"/>
<dbReference type="VEuPathDB" id="HostDB:ENSG00000160214"/>
<dbReference type="eggNOG" id="KOG3911">
    <property type="taxonomic scope" value="Eukaryota"/>
</dbReference>
<dbReference type="GeneTree" id="ENSGT00390000011821"/>
<dbReference type="HOGENOM" id="CLU_022876_2_0_1"/>
<dbReference type="InParanoid" id="P56182"/>
<dbReference type="OMA" id="GFWETTV"/>
<dbReference type="OrthoDB" id="2019504at2759"/>
<dbReference type="PAN-GO" id="P56182">
    <property type="GO annotations" value="3 GO annotations based on evolutionary models"/>
</dbReference>
<dbReference type="PhylomeDB" id="P56182"/>
<dbReference type="TreeFam" id="TF315294"/>
<dbReference type="PathwayCommons" id="P56182"/>
<dbReference type="Reactome" id="R-HSA-6791226">
    <property type="pathway name" value="Major pathway of rRNA processing in the nucleolus and cytosol"/>
</dbReference>
<dbReference type="SignaLink" id="P56182"/>
<dbReference type="BioGRID-ORCS" id="8568">
    <property type="hits" value="715 hits in 1162 CRISPR screens"/>
</dbReference>
<dbReference type="CD-CODE" id="91857CE7">
    <property type="entry name" value="Nucleolus"/>
</dbReference>
<dbReference type="ChiTaRS" id="RRP1">
    <property type="organism name" value="human"/>
</dbReference>
<dbReference type="GeneWiki" id="RRP1"/>
<dbReference type="GenomeRNAi" id="8568"/>
<dbReference type="Pharos" id="P56182">
    <property type="development level" value="Tbio"/>
</dbReference>
<dbReference type="PRO" id="PR:P56182"/>
<dbReference type="Proteomes" id="UP000005640">
    <property type="component" value="Chromosome 21"/>
</dbReference>
<dbReference type="RNAct" id="P56182">
    <property type="molecule type" value="protein"/>
</dbReference>
<dbReference type="Bgee" id="ENSG00000160214">
    <property type="expression patterns" value="Expressed in tendon of biceps brachii and 186 other cell types or tissues"/>
</dbReference>
<dbReference type="ExpressionAtlas" id="P56182">
    <property type="expression patterns" value="baseline and differential"/>
</dbReference>
<dbReference type="GO" id="GO:0005694">
    <property type="term" value="C:chromosome"/>
    <property type="evidence" value="ECO:0000314"/>
    <property type="project" value="HPA"/>
</dbReference>
<dbReference type="GO" id="GO:0005730">
    <property type="term" value="C:nucleolus"/>
    <property type="evidence" value="ECO:0000314"/>
    <property type="project" value="HPA"/>
</dbReference>
<dbReference type="GO" id="GO:0005634">
    <property type="term" value="C:nucleus"/>
    <property type="evidence" value="ECO:0000318"/>
    <property type="project" value="GO_Central"/>
</dbReference>
<dbReference type="GO" id="GO:0030688">
    <property type="term" value="C:preribosome, small subunit precursor"/>
    <property type="evidence" value="ECO:0007669"/>
    <property type="project" value="InterPro"/>
</dbReference>
<dbReference type="GO" id="GO:0003723">
    <property type="term" value="F:RNA binding"/>
    <property type="evidence" value="ECO:0007005"/>
    <property type="project" value="UniProtKB"/>
</dbReference>
<dbReference type="GO" id="GO:0006364">
    <property type="term" value="P:rRNA processing"/>
    <property type="evidence" value="ECO:0007669"/>
    <property type="project" value="UniProtKB-KW"/>
</dbReference>
<dbReference type="InterPro" id="IPR010301">
    <property type="entry name" value="RRP1"/>
</dbReference>
<dbReference type="PANTHER" id="PTHR13026">
    <property type="entry name" value="NNP-1 PROTEIN NOVEL NUCLEAR PROTEIN 1 NOP52"/>
    <property type="match status" value="1"/>
</dbReference>
<dbReference type="PANTHER" id="PTHR13026:SF1">
    <property type="entry name" value="RIBOSOMAL RNA PROCESSING PROTEIN 1 HOMOLOG A"/>
    <property type="match status" value="1"/>
</dbReference>
<dbReference type="Pfam" id="PF05997">
    <property type="entry name" value="Nop52"/>
    <property type="match status" value="1"/>
</dbReference>
<evidence type="ECO:0000256" key="1">
    <source>
        <dbReference type="SAM" id="MobiDB-lite"/>
    </source>
</evidence>
<evidence type="ECO:0000269" key="2">
    <source>
    </source>
</evidence>
<evidence type="ECO:0000269" key="3">
    <source>
    </source>
</evidence>
<evidence type="ECO:0000269" key="4">
    <source>
    </source>
</evidence>
<evidence type="ECO:0000269" key="5">
    <source>
    </source>
</evidence>
<evidence type="ECO:0000269" key="6">
    <source>
    </source>
</evidence>
<evidence type="ECO:0000269" key="7">
    <source>
    </source>
</evidence>
<evidence type="ECO:0000269" key="8">
    <source>
    </source>
</evidence>
<evidence type="ECO:0000305" key="9"/>
<evidence type="ECO:0007744" key="10">
    <source>
    </source>
</evidence>
<evidence type="ECO:0007744" key="11">
    <source>
    </source>
</evidence>
<evidence type="ECO:0007744" key="12">
    <source>
    </source>
</evidence>
<evidence type="ECO:0007744" key="13">
    <source>
    </source>
</evidence>
<feature type="chain" id="PRO_0000096887" description="Ribosomal RNA processing protein 1 homolog A">
    <location>
        <begin position="1"/>
        <end position="461"/>
    </location>
</feature>
<feature type="region of interest" description="Disordered" evidence="1">
    <location>
        <begin position="239"/>
        <end position="295"/>
    </location>
</feature>
<feature type="region of interest" description="Disordered" evidence="1">
    <location>
        <begin position="354"/>
        <end position="461"/>
    </location>
</feature>
<feature type="compositionally biased region" description="Acidic residues" evidence="1">
    <location>
        <begin position="239"/>
        <end position="252"/>
    </location>
</feature>
<feature type="compositionally biased region" description="Basic and acidic residues" evidence="1">
    <location>
        <begin position="253"/>
        <end position="267"/>
    </location>
</feature>
<feature type="compositionally biased region" description="Basic residues" evidence="1">
    <location>
        <begin position="357"/>
        <end position="368"/>
    </location>
</feature>
<feature type="compositionally biased region" description="Basic and acidic residues" evidence="1">
    <location>
        <begin position="371"/>
        <end position="381"/>
    </location>
</feature>
<feature type="compositionally biased region" description="Basic residues" evidence="1">
    <location>
        <begin position="425"/>
        <end position="437"/>
    </location>
</feature>
<feature type="modified residue" description="Phosphoserine" evidence="13">
    <location>
        <position position="245"/>
    </location>
</feature>
<feature type="modified residue" description="Phosphoserine" evidence="11">
    <location>
        <position position="247"/>
    </location>
</feature>
<feature type="modified residue" description="Phosphoserine" evidence="11">
    <location>
        <position position="250"/>
    </location>
</feature>
<feature type="modified residue" description="Phosphoserine" evidence="11">
    <location>
        <position position="251"/>
    </location>
</feature>
<feature type="modified residue" description="Phosphoserine" evidence="12">
    <location>
        <position position="383"/>
    </location>
</feature>
<feature type="modified residue" description="Phosphothreonine" evidence="10">
    <location>
        <position position="412"/>
    </location>
</feature>
<feature type="modified residue" description="N5-methylglutamine" evidence="7">
    <location>
        <position position="427"/>
    </location>
</feature>
<feature type="sequence variant" id="VAR_053894" description="In dbSNP:rs34224504.">
    <original>I</original>
    <variation>V</variation>
    <location>
        <position position="194"/>
    </location>
</feature>
<feature type="sequence variant" id="VAR_053895" description="In dbSNP:rs915770." evidence="4">
    <original>K</original>
    <variation>R</variation>
    <location>
        <position position="326"/>
    </location>
</feature>
<feature type="mutagenesis site" description="Abolishes methylation by N6AMT1." evidence="7">
    <original>Q</original>
    <variation>R</variation>
    <location>
        <position position="427"/>
    </location>
</feature>
<organism>
    <name type="scientific">Homo sapiens</name>
    <name type="common">Human</name>
    <dbReference type="NCBI Taxonomy" id="9606"/>
    <lineage>
        <taxon>Eukaryota</taxon>
        <taxon>Metazoa</taxon>
        <taxon>Chordata</taxon>
        <taxon>Craniata</taxon>
        <taxon>Vertebrata</taxon>
        <taxon>Euteleostomi</taxon>
        <taxon>Mammalia</taxon>
        <taxon>Eutheria</taxon>
        <taxon>Euarchontoglires</taxon>
        <taxon>Primates</taxon>
        <taxon>Haplorrhini</taxon>
        <taxon>Catarrhini</taxon>
        <taxon>Hominidae</taxon>
        <taxon>Homo</taxon>
    </lineage>
</organism>
<comment type="function">
    <text evidence="2">Plays a critical role in the generation of 28S rRNA.</text>
</comment>
<comment type="subunit">
    <text evidence="5 6">Interacts with C1QBP (PubMed:21536856). Interacts with RRP1B (PubMed:20926688).</text>
</comment>
<comment type="interaction">
    <interactant intactId="EBI-2880285">
        <id>P56182</id>
    </interactant>
    <interactant intactId="EBI-372051">
        <id>Q14684</id>
        <label>RRP1B</label>
    </interactant>
    <organismsDiffer>false</organismsDiffer>
    <experiments>2</experiments>
</comment>
<comment type="interaction">
    <interactant intactId="EBI-2880285">
        <id>P56182</id>
    </interactant>
    <interactant intactId="EBI-12023934">
        <id>Q5MJ10</id>
        <label>SPANXN2</label>
    </interactant>
    <organismsDiffer>false</organismsDiffer>
    <experiments>3</experiments>
</comment>
<comment type="subcellular location">
    <subcellularLocation>
        <location evidence="3 8">Nucleus</location>
        <location evidence="3 8">Nucleolus</location>
    </subcellularLocation>
</comment>
<comment type="tissue specificity">
    <text evidence="8">Ubiquitously expressed in fetal and adult tissues.</text>
</comment>
<comment type="PTM">
    <text evidence="7">Methylated at Gln-427 by N6AMT1.</text>
</comment>
<comment type="similarity">
    <text evidence="9">Belongs to the RRP1 family.</text>
</comment>
<name>RRP1_HUMAN</name>
<proteinExistence type="evidence at protein level"/>